<name>RL16_MICLC</name>
<keyword id="KW-1185">Reference proteome</keyword>
<keyword id="KW-0687">Ribonucleoprotein</keyword>
<keyword id="KW-0689">Ribosomal protein</keyword>
<keyword id="KW-0694">RNA-binding</keyword>
<keyword id="KW-0699">rRNA-binding</keyword>
<keyword id="KW-0820">tRNA-binding</keyword>
<dbReference type="EMBL" id="CP001628">
    <property type="protein sequence ID" value="ACS31196.1"/>
    <property type="molecule type" value="Genomic_DNA"/>
</dbReference>
<dbReference type="RefSeq" id="WP_002857481.1">
    <property type="nucleotide sequence ID" value="NZ_WBMF01000001.1"/>
</dbReference>
<dbReference type="SMR" id="C5CC55"/>
<dbReference type="STRING" id="465515.Mlut_17090"/>
<dbReference type="EnsemblBacteria" id="ACS31196">
    <property type="protein sequence ID" value="ACS31196"/>
    <property type="gene ID" value="Mlut_17090"/>
</dbReference>
<dbReference type="GeneID" id="93343576"/>
<dbReference type="KEGG" id="mlu:Mlut_17090"/>
<dbReference type="eggNOG" id="COG0197">
    <property type="taxonomic scope" value="Bacteria"/>
</dbReference>
<dbReference type="HOGENOM" id="CLU_078858_2_1_11"/>
<dbReference type="Proteomes" id="UP000000738">
    <property type="component" value="Chromosome"/>
</dbReference>
<dbReference type="GO" id="GO:0022625">
    <property type="term" value="C:cytosolic large ribosomal subunit"/>
    <property type="evidence" value="ECO:0007669"/>
    <property type="project" value="TreeGrafter"/>
</dbReference>
<dbReference type="GO" id="GO:0019843">
    <property type="term" value="F:rRNA binding"/>
    <property type="evidence" value="ECO:0007669"/>
    <property type="project" value="UniProtKB-UniRule"/>
</dbReference>
<dbReference type="GO" id="GO:0003735">
    <property type="term" value="F:structural constituent of ribosome"/>
    <property type="evidence" value="ECO:0007669"/>
    <property type="project" value="InterPro"/>
</dbReference>
<dbReference type="GO" id="GO:0000049">
    <property type="term" value="F:tRNA binding"/>
    <property type="evidence" value="ECO:0007669"/>
    <property type="project" value="UniProtKB-KW"/>
</dbReference>
<dbReference type="GO" id="GO:0006412">
    <property type="term" value="P:translation"/>
    <property type="evidence" value="ECO:0007669"/>
    <property type="project" value="UniProtKB-UniRule"/>
</dbReference>
<dbReference type="CDD" id="cd01433">
    <property type="entry name" value="Ribosomal_L16_L10e"/>
    <property type="match status" value="1"/>
</dbReference>
<dbReference type="FunFam" id="3.90.1170.10:FF:000001">
    <property type="entry name" value="50S ribosomal protein L16"/>
    <property type="match status" value="1"/>
</dbReference>
<dbReference type="Gene3D" id="3.90.1170.10">
    <property type="entry name" value="Ribosomal protein L10e/L16"/>
    <property type="match status" value="1"/>
</dbReference>
<dbReference type="HAMAP" id="MF_01342">
    <property type="entry name" value="Ribosomal_uL16"/>
    <property type="match status" value="1"/>
</dbReference>
<dbReference type="InterPro" id="IPR047873">
    <property type="entry name" value="Ribosomal_uL16"/>
</dbReference>
<dbReference type="InterPro" id="IPR000114">
    <property type="entry name" value="Ribosomal_uL16_bact-type"/>
</dbReference>
<dbReference type="InterPro" id="IPR020798">
    <property type="entry name" value="Ribosomal_uL16_CS"/>
</dbReference>
<dbReference type="InterPro" id="IPR016180">
    <property type="entry name" value="Ribosomal_uL16_dom"/>
</dbReference>
<dbReference type="InterPro" id="IPR036920">
    <property type="entry name" value="Ribosomal_uL16_sf"/>
</dbReference>
<dbReference type="NCBIfam" id="TIGR01164">
    <property type="entry name" value="rplP_bact"/>
    <property type="match status" value="1"/>
</dbReference>
<dbReference type="PANTHER" id="PTHR12220">
    <property type="entry name" value="50S/60S RIBOSOMAL PROTEIN L16"/>
    <property type="match status" value="1"/>
</dbReference>
<dbReference type="PANTHER" id="PTHR12220:SF13">
    <property type="entry name" value="LARGE RIBOSOMAL SUBUNIT PROTEIN UL16M"/>
    <property type="match status" value="1"/>
</dbReference>
<dbReference type="Pfam" id="PF00252">
    <property type="entry name" value="Ribosomal_L16"/>
    <property type="match status" value="1"/>
</dbReference>
<dbReference type="PRINTS" id="PR00060">
    <property type="entry name" value="RIBOSOMALL16"/>
</dbReference>
<dbReference type="SUPFAM" id="SSF54686">
    <property type="entry name" value="Ribosomal protein L16p/L10e"/>
    <property type="match status" value="1"/>
</dbReference>
<dbReference type="PROSITE" id="PS00586">
    <property type="entry name" value="RIBOSOMAL_L16_1"/>
    <property type="match status" value="1"/>
</dbReference>
<dbReference type="PROSITE" id="PS00701">
    <property type="entry name" value="RIBOSOMAL_L16_2"/>
    <property type="match status" value="1"/>
</dbReference>
<sequence length="138" mass="15542">MLIPRRVKHRKQHHPKRSGAAKGGTTVTFGEWGIQALTPAYVTNRQIEAARIAMTRYIKRGGKVWINIYPDRPITKKPAETRMGSGKGSPEWWVANVKPGRVLFELSGVTEDVAREALRLAIHKLPLKARIIRREGGE</sequence>
<feature type="chain" id="PRO_1000214739" description="Large ribosomal subunit protein uL16">
    <location>
        <begin position="1"/>
        <end position="138"/>
    </location>
</feature>
<feature type="region of interest" description="Disordered" evidence="2">
    <location>
        <begin position="1"/>
        <end position="24"/>
    </location>
</feature>
<feature type="compositionally biased region" description="Basic residues" evidence="2">
    <location>
        <begin position="1"/>
        <end position="19"/>
    </location>
</feature>
<accession>C5CC55</accession>
<organism>
    <name type="scientific">Micrococcus luteus (strain ATCC 4698 / DSM 20030 / JCM 1464 / CCM 169 / CCUG 5858 / IAM 1056 / NBRC 3333 / NCIMB 9278 / NCTC 2665 / VKM Ac-2230)</name>
    <name type="common">Micrococcus lysodeikticus</name>
    <dbReference type="NCBI Taxonomy" id="465515"/>
    <lineage>
        <taxon>Bacteria</taxon>
        <taxon>Bacillati</taxon>
        <taxon>Actinomycetota</taxon>
        <taxon>Actinomycetes</taxon>
        <taxon>Micrococcales</taxon>
        <taxon>Micrococcaceae</taxon>
        <taxon>Micrococcus</taxon>
    </lineage>
</organism>
<protein>
    <recommendedName>
        <fullName evidence="1">Large ribosomal subunit protein uL16</fullName>
    </recommendedName>
    <alternativeName>
        <fullName evidence="3">50S ribosomal protein L16</fullName>
    </alternativeName>
</protein>
<reference key="1">
    <citation type="journal article" date="2010" name="J. Bacteriol.">
        <title>Genome sequence of the Fleming strain of Micrococcus luteus, a simple free-living actinobacterium.</title>
        <authorList>
            <person name="Young M."/>
            <person name="Artsatbanov V."/>
            <person name="Beller H.R."/>
            <person name="Chandra G."/>
            <person name="Chater K.F."/>
            <person name="Dover L.G."/>
            <person name="Goh E.B."/>
            <person name="Kahan T."/>
            <person name="Kaprelyants A.S."/>
            <person name="Kyrpides N."/>
            <person name="Lapidus A."/>
            <person name="Lowry S.R."/>
            <person name="Lykidis A."/>
            <person name="Mahillon J."/>
            <person name="Markowitz V."/>
            <person name="Mavromatis K."/>
            <person name="Mukamolova G.V."/>
            <person name="Oren A."/>
            <person name="Rokem J.S."/>
            <person name="Smith M.C."/>
            <person name="Young D.I."/>
            <person name="Greenblatt C.L."/>
        </authorList>
    </citation>
    <scope>NUCLEOTIDE SEQUENCE [LARGE SCALE GENOMIC DNA]</scope>
    <source>
        <strain>ATCC 4698 / DSM 20030 / JCM 1464 / CCM 169 / CCUG 5858 / IAM 1056 / NBRC 3333 / NCIMB 9278 / NCTC 2665 / VKM Ac-2230</strain>
    </source>
</reference>
<proteinExistence type="inferred from homology"/>
<evidence type="ECO:0000255" key="1">
    <source>
        <dbReference type="HAMAP-Rule" id="MF_01342"/>
    </source>
</evidence>
<evidence type="ECO:0000256" key="2">
    <source>
        <dbReference type="SAM" id="MobiDB-lite"/>
    </source>
</evidence>
<evidence type="ECO:0000305" key="3"/>
<comment type="function">
    <text evidence="1">Binds 23S rRNA and is also seen to make contacts with the A and possibly P site tRNAs.</text>
</comment>
<comment type="subunit">
    <text evidence="1">Part of the 50S ribosomal subunit.</text>
</comment>
<comment type="similarity">
    <text evidence="1">Belongs to the universal ribosomal protein uL16 family.</text>
</comment>
<gene>
    <name evidence="1" type="primary">rplP</name>
    <name type="ordered locus">Mlut_17090</name>
</gene>